<organism>
    <name type="scientific">Oryctolagus cuniculus</name>
    <name type="common">Rabbit</name>
    <dbReference type="NCBI Taxonomy" id="9986"/>
    <lineage>
        <taxon>Eukaryota</taxon>
        <taxon>Metazoa</taxon>
        <taxon>Chordata</taxon>
        <taxon>Craniata</taxon>
        <taxon>Vertebrata</taxon>
        <taxon>Euteleostomi</taxon>
        <taxon>Mammalia</taxon>
        <taxon>Eutheria</taxon>
        <taxon>Euarchontoglires</taxon>
        <taxon>Glires</taxon>
        <taxon>Lagomorpha</taxon>
        <taxon>Leporidae</taxon>
        <taxon>Oryctolagus</taxon>
    </lineage>
</organism>
<name>RL4_RABIT</name>
<dbReference type="EMBL" id="AAGW02025164">
    <property type="status" value="NOT_ANNOTATED_CDS"/>
    <property type="molecule type" value="Genomic_DNA"/>
</dbReference>
<dbReference type="PDB" id="3JAG">
    <property type="method" value="EM"/>
    <property type="resolution" value="3.65 A"/>
    <property type="chains" value="C=2-360"/>
</dbReference>
<dbReference type="PDB" id="3JAH">
    <property type="method" value="EM"/>
    <property type="resolution" value="3.45 A"/>
    <property type="chains" value="C=2-360"/>
</dbReference>
<dbReference type="PDB" id="3JAI">
    <property type="method" value="EM"/>
    <property type="resolution" value="3.65 A"/>
    <property type="chains" value="C=2-360"/>
</dbReference>
<dbReference type="PDB" id="5LZS">
    <property type="method" value="EM"/>
    <property type="resolution" value="3.31 A"/>
    <property type="chains" value="C=1-413"/>
</dbReference>
<dbReference type="PDB" id="5LZT">
    <property type="method" value="EM"/>
    <property type="resolution" value="3.65 A"/>
    <property type="chains" value="C=1-413"/>
</dbReference>
<dbReference type="PDB" id="5LZU">
    <property type="method" value="EM"/>
    <property type="resolution" value="3.75 A"/>
    <property type="chains" value="C=1-378"/>
</dbReference>
<dbReference type="PDB" id="5LZV">
    <property type="method" value="EM"/>
    <property type="resolution" value="3.35 A"/>
    <property type="chains" value="C=1-413"/>
</dbReference>
<dbReference type="PDB" id="5LZW">
    <property type="method" value="EM"/>
    <property type="resolution" value="3.53 A"/>
    <property type="chains" value="C=1-413"/>
</dbReference>
<dbReference type="PDB" id="5LZZ">
    <property type="method" value="EM"/>
    <property type="resolution" value="3.47 A"/>
    <property type="chains" value="C=1-413"/>
</dbReference>
<dbReference type="PDB" id="6D90">
    <property type="method" value="EM"/>
    <property type="resolution" value="3.20 A"/>
    <property type="chains" value="C=1-378"/>
</dbReference>
<dbReference type="PDB" id="6D9J">
    <property type="method" value="EM"/>
    <property type="resolution" value="3.20 A"/>
    <property type="chains" value="C=1-378"/>
</dbReference>
<dbReference type="PDB" id="6FTG">
    <property type="method" value="EM"/>
    <property type="resolution" value="9.10 A"/>
    <property type="chains" value="C=2-361"/>
</dbReference>
<dbReference type="PDB" id="6FTI">
    <property type="method" value="EM"/>
    <property type="resolution" value="4.20 A"/>
    <property type="chains" value="C=2-363"/>
</dbReference>
<dbReference type="PDB" id="6FTJ">
    <property type="method" value="EM"/>
    <property type="resolution" value="4.70 A"/>
    <property type="chains" value="C=2-363"/>
</dbReference>
<dbReference type="PDB" id="6MTB">
    <property type="method" value="EM"/>
    <property type="resolution" value="3.60 A"/>
    <property type="chains" value="C=2-363"/>
</dbReference>
<dbReference type="PDB" id="6MTC">
    <property type="method" value="EM"/>
    <property type="resolution" value="3.40 A"/>
    <property type="chains" value="C=2-363"/>
</dbReference>
<dbReference type="PDB" id="6MTD">
    <property type="method" value="EM"/>
    <property type="resolution" value="3.30 A"/>
    <property type="chains" value="C=2-363"/>
</dbReference>
<dbReference type="PDB" id="6P5I">
    <property type="method" value="EM"/>
    <property type="resolution" value="3.10 A"/>
    <property type="chains" value="AC=1-378"/>
</dbReference>
<dbReference type="PDB" id="6P5J">
    <property type="method" value="EM"/>
    <property type="resolution" value="3.10 A"/>
    <property type="chains" value="AC=1-378"/>
</dbReference>
<dbReference type="PDB" id="6P5K">
    <property type="method" value="EM"/>
    <property type="resolution" value="3.10 A"/>
    <property type="chains" value="AC=1-378"/>
</dbReference>
<dbReference type="PDB" id="6P5N">
    <property type="method" value="EM"/>
    <property type="resolution" value="3.20 A"/>
    <property type="chains" value="AC=1-378"/>
</dbReference>
<dbReference type="PDB" id="6R5Q">
    <property type="method" value="EM"/>
    <property type="resolution" value="3.00 A"/>
    <property type="chains" value="C=2-363"/>
</dbReference>
<dbReference type="PDB" id="6R6G">
    <property type="method" value="EM"/>
    <property type="resolution" value="3.70 A"/>
    <property type="chains" value="C=2-363"/>
</dbReference>
<dbReference type="PDB" id="6R6P">
    <property type="method" value="EM"/>
    <property type="resolution" value="3.10 A"/>
    <property type="chains" value="C=2-363"/>
</dbReference>
<dbReference type="PDB" id="6R7Q">
    <property type="method" value="EM"/>
    <property type="resolution" value="3.90 A"/>
    <property type="chains" value="C=2-363"/>
</dbReference>
<dbReference type="PDB" id="6ZVK">
    <property type="method" value="EM"/>
    <property type="resolution" value="3.49 A"/>
    <property type="chains" value="t2=2-363"/>
</dbReference>
<dbReference type="PDB" id="7A01">
    <property type="method" value="EM"/>
    <property type="resolution" value="3.60 A"/>
    <property type="chains" value="t2=2-363"/>
</dbReference>
<dbReference type="PDB" id="7MDZ">
    <property type="method" value="EM"/>
    <property type="resolution" value="3.20 A"/>
    <property type="chains" value="C=1-413"/>
</dbReference>
<dbReference type="PDB" id="7NFX">
    <property type="method" value="EM"/>
    <property type="resolution" value="3.20 A"/>
    <property type="chains" value="C=1-413"/>
</dbReference>
<dbReference type="PDB" id="7NWG">
    <property type="method" value="EM"/>
    <property type="resolution" value="3.80 A"/>
    <property type="chains" value="C3=1-378"/>
</dbReference>
<dbReference type="PDB" id="7NWH">
    <property type="method" value="EM"/>
    <property type="resolution" value="4.10 A"/>
    <property type="chains" value="C=1-378"/>
</dbReference>
<dbReference type="PDB" id="7O7Y">
    <property type="method" value="EM"/>
    <property type="resolution" value="2.20 A"/>
    <property type="chains" value="BC=1-413"/>
</dbReference>
<dbReference type="PDB" id="7O7Z">
    <property type="method" value="EM"/>
    <property type="resolution" value="2.40 A"/>
    <property type="chains" value="BC=1-413"/>
</dbReference>
<dbReference type="PDB" id="7O80">
    <property type="method" value="EM"/>
    <property type="resolution" value="2.90 A"/>
    <property type="chains" value="BC=1-413"/>
</dbReference>
<dbReference type="PDB" id="7O81">
    <property type="method" value="EM"/>
    <property type="resolution" value="3.10 A"/>
    <property type="chains" value="BC=1-413"/>
</dbReference>
<dbReference type="PDB" id="7OBR">
    <property type="method" value="EM"/>
    <property type="resolution" value="2.80 A"/>
    <property type="chains" value="C=1-413"/>
</dbReference>
<dbReference type="PDB" id="7OYD">
    <property type="method" value="EM"/>
    <property type="resolution" value="2.30 A"/>
    <property type="chains" value="C=1-413"/>
</dbReference>
<dbReference type="PDB" id="7QWQ">
    <property type="method" value="EM"/>
    <property type="resolution" value="2.83 A"/>
    <property type="chains" value="C=1-413"/>
</dbReference>
<dbReference type="PDB" id="7QWR">
    <property type="method" value="EM"/>
    <property type="resolution" value="2.90 A"/>
    <property type="chains" value="C=1-413"/>
</dbReference>
<dbReference type="PDB" id="7QWS">
    <property type="method" value="EM"/>
    <property type="resolution" value="3.40 A"/>
    <property type="chains" value="C=1-413"/>
</dbReference>
<dbReference type="PDB" id="7TM3">
    <property type="method" value="EM"/>
    <property type="resolution" value="3.25 A"/>
    <property type="chains" value="C=1-413"/>
</dbReference>
<dbReference type="PDB" id="7TUT">
    <property type="method" value="EM"/>
    <property type="resolution" value="3.88 A"/>
    <property type="chains" value="C=1-413"/>
</dbReference>
<dbReference type="PDB" id="7ZJW">
    <property type="method" value="EM"/>
    <property type="resolution" value="2.80 A"/>
    <property type="chains" value="LF=1-413"/>
</dbReference>
<dbReference type="PDB" id="7ZJX">
    <property type="method" value="EM"/>
    <property type="resolution" value="3.10 A"/>
    <property type="chains" value="LF=1-413"/>
</dbReference>
<dbReference type="PDB" id="8B5L">
    <property type="method" value="EM"/>
    <property type="resolution" value="2.86 A"/>
    <property type="chains" value="C=2-363"/>
</dbReference>
<dbReference type="PDB" id="8B6C">
    <property type="method" value="EM"/>
    <property type="resolution" value="2.79 A"/>
    <property type="chains" value="C=2-363"/>
</dbReference>
<dbReference type="PDB" id="8BHF">
    <property type="method" value="EM"/>
    <property type="resolution" value="3.10 A"/>
    <property type="chains" value="l3=2-363"/>
</dbReference>
<dbReference type="PDB" id="8BTK">
    <property type="method" value="EM"/>
    <property type="resolution" value="3.50 A"/>
    <property type="chains" value="BC=1-413"/>
</dbReference>
<dbReference type="PDB" id="8P2K">
    <property type="method" value="EM"/>
    <property type="resolution" value="2.90 A"/>
    <property type="chains" value="BC=1-413"/>
</dbReference>
<dbReference type="PDB" id="8RJB">
    <property type="method" value="EM"/>
    <property type="resolution" value="2.69 A"/>
    <property type="chains" value="C=1-413"/>
</dbReference>
<dbReference type="PDB" id="8RJC">
    <property type="method" value="EM"/>
    <property type="resolution" value="2.90 A"/>
    <property type="chains" value="C=1-413"/>
</dbReference>
<dbReference type="PDB" id="8RJD">
    <property type="method" value="EM"/>
    <property type="resolution" value="2.79 A"/>
    <property type="chains" value="C=1-413"/>
</dbReference>
<dbReference type="PDB" id="8SCB">
    <property type="method" value="EM"/>
    <property type="resolution" value="2.50 A"/>
    <property type="chains" value="C=1-413"/>
</dbReference>
<dbReference type="PDB" id="8VFT">
    <property type="method" value="EM"/>
    <property type="resolution" value="3.30 A"/>
    <property type="chains" value="C=1-413"/>
</dbReference>
<dbReference type="PDB" id="9F1B">
    <property type="method" value="EM"/>
    <property type="resolution" value="3.01 A"/>
    <property type="chains" value="BC=1-413"/>
</dbReference>
<dbReference type="PDB" id="9F1C">
    <property type="method" value="EM"/>
    <property type="resolution" value="3.78 A"/>
    <property type="chains" value="BC=1-413"/>
</dbReference>
<dbReference type="PDB" id="9F1D">
    <property type="method" value="EM"/>
    <property type="resolution" value="3.26 A"/>
    <property type="chains" value="BC=1-413"/>
</dbReference>
<dbReference type="PDBsum" id="3JAG"/>
<dbReference type="PDBsum" id="3JAH"/>
<dbReference type="PDBsum" id="3JAI"/>
<dbReference type="PDBsum" id="5LZS"/>
<dbReference type="PDBsum" id="5LZT"/>
<dbReference type="PDBsum" id="5LZU"/>
<dbReference type="PDBsum" id="5LZV"/>
<dbReference type="PDBsum" id="5LZW"/>
<dbReference type="PDBsum" id="5LZZ"/>
<dbReference type="PDBsum" id="6D90"/>
<dbReference type="PDBsum" id="6D9J"/>
<dbReference type="PDBsum" id="6FTG"/>
<dbReference type="PDBsum" id="6FTI"/>
<dbReference type="PDBsum" id="6FTJ"/>
<dbReference type="PDBsum" id="6MTB"/>
<dbReference type="PDBsum" id="6MTC"/>
<dbReference type="PDBsum" id="6MTD"/>
<dbReference type="PDBsum" id="6P5I"/>
<dbReference type="PDBsum" id="6P5J"/>
<dbReference type="PDBsum" id="6P5K"/>
<dbReference type="PDBsum" id="6P5N"/>
<dbReference type="PDBsum" id="6R5Q"/>
<dbReference type="PDBsum" id="6R6G"/>
<dbReference type="PDBsum" id="6R6P"/>
<dbReference type="PDBsum" id="6R7Q"/>
<dbReference type="PDBsum" id="6ZVK"/>
<dbReference type="PDBsum" id="7A01"/>
<dbReference type="PDBsum" id="7MDZ"/>
<dbReference type="PDBsum" id="7NFX"/>
<dbReference type="PDBsum" id="7NWG"/>
<dbReference type="PDBsum" id="7NWH"/>
<dbReference type="PDBsum" id="7O7Y"/>
<dbReference type="PDBsum" id="7O7Z"/>
<dbReference type="PDBsum" id="7O80"/>
<dbReference type="PDBsum" id="7O81"/>
<dbReference type="PDBsum" id="7OBR"/>
<dbReference type="PDBsum" id="7OYD"/>
<dbReference type="PDBsum" id="7QWQ"/>
<dbReference type="PDBsum" id="7QWR"/>
<dbReference type="PDBsum" id="7QWS"/>
<dbReference type="PDBsum" id="7TM3"/>
<dbReference type="PDBsum" id="7TUT"/>
<dbReference type="PDBsum" id="7ZJW"/>
<dbReference type="PDBsum" id="7ZJX"/>
<dbReference type="PDBsum" id="8B5L"/>
<dbReference type="PDBsum" id="8B6C"/>
<dbReference type="PDBsum" id="8BHF"/>
<dbReference type="PDBsum" id="8BTK"/>
<dbReference type="PDBsum" id="8P2K"/>
<dbReference type="PDBsum" id="8RJB"/>
<dbReference type="PDBsum" id="8RJC"/>
<dbReference type="PDBsum" id="8RJD"/>
<dbReference type="PDBsum" id="8SCB"/>
<dbReference type="PDBsum" id="8VFT"/>
<dbReference type="PDBsum" id="9F1B"/>
<dbReference type="PDBsum" id="9F1C"/>
<dbReference type="PDBsum" id="9F1D"/>
<dbReference type="EMDB" id="EMD-0099"/>
<dbReference type="EMDB" id="EMD-0100"/>
<dbReference type="EMDB" id="EMD-11459"/>
<dbReference type="EMDB" id="EMD-11590"/>
<dbReference type="EMDB" id="EMD-12303"/>
<dbReference type="EMDB" id="EMD-12631"/>
<dbReference type="EMDB" id="EMD-12632"/>
<dbReference type="EMDB" id="EMD-12756"/>
<dbReference type="EMDB" id="EMD-12757"/>
<dbReference type="EMDB" id="EMD-12758"/>
<dbReference type="EMDB" id="EMD-12759"/>
<dbReference type="EMDB" id="EMD-12801"/>
<dbReference type="EMDB" id="EMD-13114"/>
<dbReference type="EMDB" id="EMD-14191"/>
<dbReference type="EMDB" id="EMD-14192"/>
<dbReference type="EMDB" id="EMD-14193"/>
<dbReference type="EMDB" id="EMD-14751"/>
<dbReference type="EMDB" id="EMD-14752"/>
<dbReference type="EMDB" id="EMD-15860"/>
<dbReference type="EMDB" id="EMD-15863"/>
<dbReference type="EMDB" id="EMD-16052"/>
<dbReference type="EMDB" id="EMD-16232"/>
<dbReference type="EMDB" id="EMD-17367"/>
<dbReference type="EMDB" id="EMD-20255"/>
<dbReference type="EMDB" id="EMD-20256"/>
<dbReference type="EMDB" id="EMD-20257"/>
<dbReference type="EMDB" id="EMD-20258"/>
<dbReference type="EMDB" id="EMD-23785"/>
<dbReference type="EMDB" id="EMD-25994"/>
<dbReference type="EMDB" id="EMD-26133"/>
<dbReference type="EMDB" id="EMD-40344"/>
<dbReference type="EMDB" id="EMD-4130"/>
<dbReference type="EMDB" id="EMD-4131"/>
<dbReference type="EMDB" id="EMD-4132"/>
<dbReference type="EMDB" id="EMD-4133"/>
<dbReference type="EMDB" id="EMD-4134"/>
<dbReference type="EMDB" id="EMD-4137"/>
<dbReference type="EMDB" id="EMD-4300"/>
<dbReference type="EMDB" id="EMD-4315"/>
<dbReference type="EMDB" id="EMD-4316"/>
<dbReference type="EMDB" id="EMD-4317"/>
<dbReference type="EMDB" id="EMD-43189"/>
<dbReference type="EMDB" id="EMD-4729"/>
<dbReference type="EMDB" id="EMD-4735"/>
<dbReference type="EMDB" id="EMD-4737"/>
<dbReference type="EMDB" id="EMD-4745"/>
<dbReference type="EMDB" id="EMD-50124"/>
<dbReference type="EMDB" id="EMD-50125"/>
<dbReference type="EMDB" id="EMD-50126"/>
<dbReference type="EMDB" id="EMD-7834"/>
<dbReference type="EMDB" id="EMD-7836"/>
<dbReference type="EMDB" id="EMD-9237"/>
<dbReference type="EMDB" id="EMD-9239"/>
<dbReference type="EMDB" id="EMD-9240"/>
<dbReference type="EMDB" id="EMD-9242"/>
<dbReference type="SMR" id="G1SVW5"/>
<dbReference type="IntAct" id="G1SVW5">
    <property type="interactions" value="1"/>
</dbReference>
<dbReference type="Ensembl" id="ENSOCUT00000008791.4">
    <property type="protein sequence ID" value="ENSOCUP00000007591.4"/>
    <property type="gene ID" value="ENSOCUG00000008794.4"/>
</dbReference>
<dbReference type="eggNOG" id="KOG1475">
    <property type="taxonomic scope" value="Eukaryota"/>
</dbReference>
<dbReference type="GeneTree" id="ENSGT00390000018145"/>
<dbReference type="HOGENOM" id="CLU_026535_4_0_1"/>
<dbReference type="TreeFam" id="TF300593"/>
<dbReference type="Proteomes" id="UP000001811">
    <property type="component" value="Chromosome 17"/>
</dbReference>
<dbReference type="Bgee" id="ENSOCUG00000008794">
    <property type="expression patterns" value="Expressed in autopod skin and 14 other cell types or tissues"/>
</dbReference>
<dbReference type="GO" id="GO:0005737">
    <property type="term" value="C:cytoplasm"/>
    <property type="evidence" value="ECO:0007669"/>
    <property type="project" value="UniProtKB-SubCell"/>
</dbReference>
<dbReference type="GO" id="GO:1990904">
    <property type="term" value="C:ribonucleoprotein complex"/>
    <property type="evidence" value="ECO:0007669"/>
    <property type="project" value="UniProtKB-KW"/>
</dbReference>
<dbReference type="GO" id="GO:0005840">
    <property type="term" value="C:ribosome"/>
    <property type="evidence" value="ECO:0007669"/>
    <property type="project" value="UniProtKB-KW"/>
</dbReference>
<dbReference type="GO" id="GO:0003735">
    <property type="term" value="F:structural constituent of ribosome"/>
    <property type="evidence" value="ECO:0007669"/>
    <property type="project" value="InterPro"/>
</dbReference>
<dbReference type="GO" id="GO:0006412">
    <property type="term" value="P:translation"/>
    <property type="evidence" value="ECO:0007669"/>
    <property type="project" value="InterPro"/>
</dbReference>
<dbReference type="FunFam" id="3.40.1370.10:FF:000002">
    <property type="entry name" value="60S ribosomal protein L4"/>
    <property type="match status" value="1"/>
</dbReference>
<dbReference type="Gene3D" id="3.40.1370.10">
    <property type="match status" value="1"/>
</dbReference>
<dbReference type="InterPro" id="IPR025755">
    <property type="entry name" value="Ribos_uL4_C_dom"/>
</dbReference>
<dbReference type="InterPro" id="IPR002136">
    <property type="entry name" value="Ribosomal_uL4"/>
</dbReference>
<dbReference type="InterPro" id="IPR023574">
    <property type="entry name" value="Ribosomal_uL4_dom_sf"/>
</dbReference>
<dbReference type="InterPro" id="IPR013000">
    <property type="entry name" value="Ribosomal_uL4_euk/arc_CS"/>
</dbReference>
<dbReference type="InterPro" id="IPR045240">
    <property type="entry name" value="Ribosomal_uL4_euk/arch"/>
</dbReference>
<dbReference type="PANTHER" id="PTHR19431">
    <property type="entry name" value="60S RIBOSOMAL PROTEIN L4"/>
    <property type="match status" value="1"/>
</dbReference>
<dbReference type="Pfam" id="PF14374">
    <property type="entry name" value="Ribos_L4_asso_C"/>
    <property type="match status" value="1"/>
</dbReference>
<dbReference type="Pfam" id="PF00573">
    <property type="entry name" value="Ribosomal_L4"/>
    <property type="match status" value="1"/>
</dbReference>
<dbReference type="SUPFAM" id="SSF52166">
    <property type="entry name" value="Ribosomal protein L4"/>
    <property type="match status" value="1"/>
</dbReference>
<dbReference type="PROSITE" id="PS00939">
    <property type="entry name" value="RIBOSOMAL_L1E"/>
    <property type="match status" value="1"/>
</dbReference>
<accession>G1SVW5</accession>
<keyword id="KW-0002">3D-structure</keyword>
<keyword id="KW-0007">Acetylation</keyword>
<keyword id="KW-0164">Citrullination</keyword>
<keyword id="KW-0963">Cytoplasm</keyword>
<keyword id="KW-1017">Isopeptide bond</keyword>
<keyword id="KW-0488">Methylation</keyword>
<keyword id="KW-0597">Phosphoprotein</keyword>
<keyword id="KW-1185">Reference proteome</keyword>
<keyword id="KW-0687">Ribonucleoprotein</keyword>
<keyword id="KW-0689">Ribosomal protein</keyword>
<keyword id="KW-0832">Ubl conjugation</keyword>
<gene>
    <name type="primary">RPL4</name>
</gene>
<evidence type="ECO:0000250" key="1">
    <source>
        <dbReference type="UniProtKB" id="P36578"/>
    </source>
</evidence>
<evidence type="ECO:0000250" key="2">
    <source>
        <dbReference type="UniProtKB" id="P50878"/>
    </source>
</evidence>
<evidence type="ECO:0000250" key="3">
    <source>
        <dbReference type="UniProtKB" id="Q9D8E6"/>
    </source>
</evidence>
<evidence type="ECO:0000256" key="4">
    <source>
        <dbReference type="SAM" id="MobiDB-lite"/>
    </source>
</evidence>
<evidence type="ECO:0000269" key="5">
    <source>
    </source>
</evidence>
<evidence type="ECO:0000269" key="6">
    <source>
    </source>
</evidence>
<evidence type="ECO:0000269" key="7">
    <source>
    </source>
</evidence>
<evidence type="ECO:0000269" key="8">
    <source>
    </source>
</evidence>
<evidence type="ECO:0000269" key="9">
    <source>
    </source>
</evidence>
<evidence type="ECO:0000269" key="10">
    <source>
    </source>
</evidence>
<evidence type="ECO:0000269" key="11">
    <source>
    </source>
</evidence>
<evidence type="ECO:0000269" key="12">
    <source>
    </source>
</evidence>
<evidence type="ECO:0000269" key="13">
    <source>
    </source>
</evidence>
<evidence type="ECO:0000305" key="14"/>
<evidence type="ECO:0007744" key="15">
    <source>
        <dbReference type="PDB" id="3JAG"/>
    </source>
</evidence>
<evidence type="ECO:0007744" key="16">
    <source>
        <dbReference type="PDB" id="3JAH"/>
    </source>
</evidence>
<evidence type="ECO:0007744" key="17">
    <source>
        <dbReference type="PDB" id="5LZS"/>
    </source>
</evidence>
<evidence type="ECO:0007744" key="18">
    <source>
        <dbReference type="PDB" id="5LZT"/>
    </source>
</evidence>
<evidence type="ECO:0007744" key="19">
    <source>
        <dbReference type="PDB" id="6D90"/>
    </source>
</evidence>
<evidence type="ECO:0007744" key="20">
    <source>
        <dbReference type="PDB" id="6D9J"/>
    </source>
</evidence>
<evidence type="ECO:0007744" key="21">
    <source>
        <dbReference type="PDB" id="6MTD"/>
    </source>
</evidence>
<evidence type="ECO:0007744" key="22">
    <source>
        <dbReference type="PDB" id="6P5I"/>
    </source>
</evidence>
<evidence type="ECO:0007744" key="23">
    <source>
        <dbReference type="PDB" id="6P5J"/>
    </source>
</evidence>
<evidence type="ECO:0007744" key="24">
    <source>
        <dbReference type="PDB" id="6R5Q"/>
    </source>
</evidence>
<evidence type="ECO:0007744" key="25">
    <source>
        <dbReference type="PDB" id="6R6G"/>
    </source>
</evidence>
<evidence type="ECO:0007744" key="26">
    <source>
        <dbReference type="PDB" id="6ZVK"/>
    </source>
</evidence>
<evidence type="ECO:0007744" key="27">
    <source>
        <dbReference type="PDB" id="7A01"/>
    </source>
</evidence>
<evidence type="ECO:0007744" key="28">
    <source>
        <dbReference type="PDB" id="7OYD"/>
    </source>
</evidence>
<evidence type="ECO:0007744" key="29">
    <source>
        <dbReference type="PDB" id="7ZJW"/>
    </source>
</evidence>
<evidence type="ECO:0007744" key="30">
    <source>
        <dbReference type="PDB" id="7ZJX"/>
    </source>
</evidence>
<reference key="1">
    <citation type="journal article" date="2011" name="Nature">
        <title>A high-resolution map of human evolutionary constraint using 29 mammals.</title>
        <authorList>
            <person name="Lindblad-Toh K."/>
            <person name="Garber M."/>
            <person name="Zuk O."/>
            <person name="Lin M.F."/>
            <person name="Parker B.J."/>
            <person name="Washietl S."/>
            <person name="Kheradpour P."/>
            <person name="Ernst J."/>
            <person name="Jordan G."/>
            <person name="Mauceli E."/>
            <person name="Ward L.D."/>
            <person name="Lowe C.B."/>
            <person name="Holloway A.K."/>
            <person name="Clamp M."/>
            <person name="Gnerre S."/>
            <person name="Alfoldi J."/>
            <person name="Beal K."/>
            <person name="Chang J."/>
            <person name="Clawson H."/>
            <person name="Cuff J."/>
            <person name="Di Palma F."/>
            <person name="Fitzgerald S."/>
            <person name="Flicek P."/>
            <person name="Guttman M."/>
            <person name="Hubisz M.J."/>
            <person name="Jaffe D.B."/>
            <person name="Jungreis I."/>
            <person name="Kent W.J."/>
            <person name="Kostka D."/>
            <person name="Lara M."/>
            <person name="Martins A.L."/>
            <person name="Massingham T."/>
            <person name="Moltke I."/>
            <person name="Raney B.J."/>
            <person name="Rasmussen M.D."/>
            <person name="Robinson J."/>
            <person name="Stark A."/>
            <person name="Vilella A.J."/>
            <person name="Wen J."/>
            <person name="Xie X."/>
            <person name="Zody M.C."/>
            <person name="Baldwin J."/>
            <person name="Bloom T."/>
            <person name="Chin C.W."/>
            <person name="Heiman D."/>
            <person name="Nicol R."/>
            <person name="Nusbaum C."/>
            <person name="Young S."/>
            <person name="Wilkinson J."/>
            <person name="Worley K.C."/>
            <person name="Kovar C.L."/>
            <person name="Muzny D.M."/>
            <person name="Gibbs R.A."/>
            <person name="Cree A."/>
            <person name="Dihn H.H."/>
            <person name="Fowler G."/>
            <person name="Jhangiani S."/>
            <person name="Joshi V."/>
            <person name="Lee S."/>
            <person name="Lewis L.R."/>
            <person name="Nazareth L.V."/>
            <person name="Okwuonu G."/>
            <person name="Santibanez J."/>
            <person name="Warren W.C."/>
            <person name="Mardis E.R."/>
            <person name="Weinstock G.M."/>
            <person name="Wilson R.K."/>
            <person name="Delehaunty K."/>
            <person name="Dooling D."/>
            <person name="Fronik C."/>
            <person name="Fulton L."/>
            <person name="Fulton B."/>
            <person name="Graves T."/>
            <person name="Minx P."/>
            <person name="Sodergren E."/>
            <person name="Birney E."/>
            <person name="Margulies E.H."/>
            <person name="Herrero J."/>
            <person name="Green E.D."/>
            <person name="Haussler D."/>
            <person name="Siepel A."/>
            <person name="Goldman N."/>
            <person name="Pollard K.S."/>
            <person name="Pedersen J.S."/>
            <person name="Lander E.S."/>
            <person name="Kellis M."/>
        </authorList>
    </citation>
    <scope>NUCLEOTIDE SEQUENCE [LARGE SCALE GENOMIC DNA]</scope>
    <source>
        <strain>Thorbecke</strain>
    </source>
</reference>
<reference evidence="15 16" key="2">
    <citation type="journal article" date="2015" name="Nature">
        <title>Structural basis for stop codon recognition in eukaryotes.</title>
        <authorList>
            <person name="Brown A."/>
            <person name="Shao S."/>
            <person name="Murray J."/>
            <person name="Hegde R.S."/>
            <person name="Ramakrishnan V."/>
        </authorList>
    </citation>
    <scope>STRUCTURE BY ELECTRON MICROSCOPY (3.45 ANGSTROMS) OF 16-374 OF RIBOSOME</scope>
    <scope>FUNCTION</scope>
    <scope>SUBCELLULAR LOCATION</scope>
    <scope>SUBUNIT</scope>
</reference>
<reference evidence="17 18" key="3">
    <citation type="journal article" date="2016" name="Cell">
        <title>Decoding mammalian ribosome-mRNA states by translational GTPase complexes.</title>
        <authorList>
            <person name="Shao S."/>
            <person name="Murray J."/>
            <person name="Brown A."/>
            <person name="Taunton J."/>
            <person name="Ramakrishnan V."/>
            <person name="Hegde R.S."/>
        </authorList>
    </citation>
    <scope>STRUCTURE BY ELECTRON MICROSCOPY (3.31 ANGSTROMS) OF 15-392 OF RIBOSOME</scope>
    <scope>FUNCTION</scope>
    <scope>SUBCELLULAR LOCATION</scope>
    <scope>SUBUNIT</scope>
</reference>
<reference evidence="19 20" key="4">
    <citation type="journal article" date="2018" name="Elife">
        <title>Dual tRNA mimicry in the Cricket paralysis virus IRES uncovers an unexpected similarity with the Hepatitis C Virus IRES.</title>
        <authorList>
            <person name="Pisareva V.P."/>
            <person name="Pisarev A.V."/>
            <person name="Fernandez I.S."/>
        </authorList>
    </citation>
    <scope>STRUCTURE BY ELECTRON MICROSCOPY (3.20 ANGSTROMS) OF RIBOSOME</scope>
    <scope>SUBCELLULAR LOCATION</scope>
    <scope>SUBUNIT</scope>
</reference>
<reference evidence="21" key="5">
    <citation type="journal article" date="2018" name="Elife">
        <title>Structures of translationally inactive mammalian ribosomes.</title>
        <authorList>
            <person name="Brown A."/>
            <person name="Baird M.R."/>
            <person name="Yip M.C."/>
            <person name="Murray J."/>
            <person name="Shao S."/>
        </authorList>
    </citation>
    <scope>STRUCTURE BY ELECTRON MICROSCOPY (3.30 ANGSTROMS) OF RIBOSOME</scope>
    <scope>SUBCELLULAR LOCATION</scope>
    <scope>SUBUNIT</scope>
</reference>
<reference evidence="24 25" key="6">
    <citation type="journal article" date="2019" name="Elife">
        <title>Structural and mutational analysis of the ribosome-arresting human XBP1u.</title>
        <authorList>
            <person name="Shanmuganathan V."/>
            <person name="Schiller N."/>
            <person name="Magoulopoulou A."/>
            <person name="Cheng J."/>
            <person name="Braunger K."/>
            <person name="Cymer F."/>
            <person name="Berninghausen O."/>
            <person name="Beatrix B."/>
            <person name="Kohno K."/>
            <person name="von Heijne G."/>
            <person name="Beckmann R."/>
        </authorList>
    </citation>
    <scope>STRUCTURE BY ELECTRON MICROSCOPY (3.00 ANGSTROMS) OF RIBOSOME</scope>
    <scope>SUBCELLULAR LOCATION</scope>
    <scope>SUBUNIT</scope>
</reference>
<reference evidence="22 23" key="7">
    <citation type="journal article" date="2019" name="EMBO J.">
        <title>The Israeli acute paralysis virus IRES captures host ribosomes by mimicking a ribosomal state with hybrid tRNAs.</title>
        <authorList>
            <person name="Acosta-Reyes F."/>
            <person name="Neupane R."/>
            <person name="Frank J."/>
            <person name="Fernandez I.S."/>
        </authorList>
    </citation>
    <scope>STRUCTURE BY ELECTRON MICROSCOPY (3.10 ANGSTROMS) OF RIBOSOME</scope>
    <scope>SUBCELLULAR LOCATION</scope>
    <scope>SUBUNIT</scope>
</reference>
<reference evidence="26 27" key="8">
    <citation type="journal article" date="2020" name="Cell Rep.">
        <title>The Halastavi arva virus intergenic region IRES promotes translation by the simplest possible initiation mechanism.</title>
        <authorList>
            <person name="Abaeva I.S."/>
            <person name="Vicens Q."/>
            <person name="Bochler A."/>
            <person name="Soufari H."/>
            <person name="Simonetti A."/>
            <person name="Pestova T.V."/>
            <person name="Hashem Y."/>
            <person name="Hellen C.U.T."/>
        </authorList>
    </citation>
    <scope>STRUCTURE BY ELECTRON MICROSCOPY (3.49 ANGSTROMS) OF RIBOSOME</scope>
    <scope>SUBCELLULAR LOCATION</scope>
    <scope>SUBUNIT</scope>
</reference>
<reference evidence="29 30" key="9">
    <citation type="journal article" date="2022" name="Science">
        <title>Structure of the mammalian ribosome as it decodes the selenocysteine UGA codon.</title>
        <authorList>
            <person name="Hilal T."/>
            <person name="Killam B.Y."/>
            <person name="Grozdanovic M."/>
            <person name="Dobosz-Bartoszek M."/>
            <person name="Loerke J."/>
            <person name="Buerger J."/>
            <person name="Mielke T."/>
            <person name="Copeland P.R."/>
            <person name="Simonovic M."/>
            <person name="Spahn C.M.T."/>
        </authorList>
    </citation>
    <scope>STRUCTURE BY ELECTRON MICROSCOPY (2.80 ANGSTROMS) OF RIBOSOME</scope>
    <scope>SUBCELLULAR LOCATION</scope>
    <scope>SUBUNIT</scope>
</reference>
<reference evidence="28" key="10">
    <citation type="journal article" date="2023" name="Nature">
        <title>A molecular network of conserved factors keeps ribosomes dormant in the egg.</title>
        <authorList>
            <person name="Leesch F."/>
            <person name="Lorenzo-Orts L."/>
            <person name="Pribitzer C."/>
            <person name="Grishkovskaya I."/>
            <person name="Roehsner J."/>
            <person name="Chugunova A."/>
            <person name="Matzinger M."/>
            <person name="Roitinger E."/>
            <person name="Belacic K."/>
            <person name="Kandolf S."/>
            <person name="Lin T.Y."/>
            <person name="Mechtler K."/>
            <person name="Meinhart A."/>
            <person name="Haselbach D."/>
            <person name="Pauli A."/>
        </authorList>
    </citation>
    <scope>STRUCTURE BY ELECTRON MICROSCOPY (2.30 ANGSTROMS) OF RIBOSOME</scope>
    <scope>SUBCELLULAR LOCATION</scope>
    <scope>SUBUNIT</scope>
</reference>
<feature type="initiator methionine" description="Removed" evidence="1">
    <location>
        <position position="1"/>
    </location>
</feature>
<feature type="chain" id="PRO_0000460090" description="Large ribosomal subunit protein uL4">
    <location>
        <begin position="2"/>
        <end position="413"/>
    </location>
</feature>
<feature type="region of interest" description="Disordered" evidence="4">
    <location>
        <begin position="355"/>
        <end position="413"/>
    </location>
</feature>
<feature type="compositionally biased region" description="Basic residues" evidence="4">
    <location>
        <begin position="370"/>
        <end position="383"/>
    </location>
</feature>
<feature type="compositionally biased region" description="Basic and acidic residues" evidence="4">
    <location>
        <begin position="393"/>
        <end position="413"/>
    </location>
</feature>
<feature type="modified residue" description="N-acetylalanine" evidence="1">
    <location>
        <position position="2"/>
    </location>
</feature>
<feature type="modified residue" description="N6-acetyllysine" evidence="1">
    <location>
        <position position="14"/>
    </location>
</feature>
<feature type="modified residue" description="Omega-N-methylarginine" evidence="3">
    <location>
        <position position="97"/>
    </location>
</feature>
<feature type="modified residue" description="N6-acetyllysine" evidence="1">
    <location>
        <position position="106"/>
    </location>
</feature>
<feature type="modified residue" description="N6-acetyllysine" evidence="3">
    <location>
        <position position="259"/>
    </location>
</feature>
<feature type="modified residue" description="Phosphothreonine" evidence="1">
    <location>
        <position position="266"/>
    </location>
</feature>
<feature type="modified residue" description="Phosphoserine" evidence="2">
    <location>
        <position position="290"/>
    </location>
</feature>
<feature type="modified residue" description="Phosphoserine" evidence="1">
    <location>
        <position position="295"/>
    </location>
</feature>
<feature type="modified residue" description="Citrulline" evidence="3">
    <location>
        <position position="300"/>
    </location>
</feature>
<feature type="modified residue" description="N6-acetyllysine" evidence="1">
    <location>
        <position position="333"/>
    </location>
</feature>
<feature type="modified residue" description="N6-acetyllysine; alternate" evidence="3">
    <location>
        <position position="361"/>
    </location>
</feature>
<feature type="modified residue" description="Phosphoserine" evidence="1">
    <location>
        <position position="362"/>
    </location>
</feature>
<feature type="cross-link" description="Glycyl lysine isopeptide (Lys-Gly) (interchain with G-Cter in SUMO2)" evidence="1">
    <location>
        <position position="239"/>
    </location>
</feature>
<feature type="cross-link" description="Glycyl lysine isopeptide (Lys-Gly) (interchain with G-Cter in SUMO2)" evidence="1">
    <location>
        <position position="327"/>
    </location>
</feature>
<feature type="cross-link" description="Glycyl lysine isopeptide (Lys-Gly) (interchain with G-Cter in SUMO1); alternate" evidence="1">
    <location>
        <position position="361"/>
    </location>
</feature>
<proteinExistence type="evidence at protein level"/>
<comment type="function">
    <text evidence="5 6">Component of the large ribosomal subunit (PubMed:26245381, PubMed:27863242). The ribosome is a large ribonucleoprotein complex responsible for the synthesis of proteins in the cell (PubMed:26245381, PubMed:27863242).</text>
</comment>
<comment type="subunit">
    <text evidence="1 2 5 6 7 8 9 10 11 12 13">Component of the large ribosomal subunit (PubMed:26245381, PubMed:27863242, PubMed:29856316, PubMed:30355441, PubMed:31246176, PubMed:31609474, PubMed:33296660, PubMed:35709277, PubMed:36653451). May bind IPO9 with low affinity (By similarity). Interacts with RBM3 (By similarity).</text>
</comment>
<comment type="subcellular location">
    <subcellularLocation>
        <location evidence="5 6 7 8 9 10 11 12 13">Cytoplasm</location>
    </subcellularLocation>
</comment>
<comment type="PTM">
    <text evidence="3">Citrullinated by PADI4.</text>
</comment>
<comment type="similarity">
    <text evidence="14">Belongs to the universal ribosomal protein uL4 family.</text>
</comment>
<sequence length="413" mass="46285">MACARPLISVYSEKGESSGKNVTLPAVFKAPIRPDIVNFVHTNLRKNNRQPYAVSELAGHQTSAESWGTGRAVARIPRVRGGGTHRSGQGAFGNMCRGGRMFAPTKTWRRWHRRVNTTQKRYAICSALAASALPALVMSKGHRIEEVPELPLVVEDKVEGYKKTKEAVLLLKKLKAWNDIKKVYASQRMRAGKGKMRNRRRIQRRGPCVIYNEDNGIVKAFRNIPGITLLNVTKLNILKLAPGGHVGRFCIWTESAFRKLDDLYGTWRKAASLKSNYNLPMHKMLNTDLSRILKSPEIQRALRAPRKKIHRRVLKKNPLKNLRIMLKLNPYAKTMRRNTILRQARNHKLRVERAAAALAAKSDPKEAPAKKKPVVGKKKKPVVGRKAAAAKKPAADKKAADKRAGPEDKKPAA</sequence>
<protein>
    <recommendedName>
        <fullName>Large ribosomal subunit protein uL4</fullName>
    </recommendedName>
    <alternativeName>
        <fullName>60S ribosomal protein L4</fullName>
    </alternativeName>
</protein>